<reference key="1">
    <citation type="journal article" date="2008" name="Appl. Microbiol. Biotechnol.">
        <title>Cloning and functional characterization of the cis-aconitic acid decarboxylase (CAD) gene from Aspergillus terreus.</title>
        <authorList>
            <person name="Kanamasa S."/>
            <person name="Dwiarti L."/>
            <person name="Okabe M."/>
            <person name="Park E.Y."/>
        </authorList>
    </citation>
    <scope>NUCLEOTIDE SEQUENCE [GENOMIC DNA]</scope>
    <scope>PROTEIN SEQUENCE OF 10-19; 55-60; 76-82; 398-405 AND 458-472</scope>
    <scope>FUNCTION</scope>
    <scope>CATALYTIC ACTIVITY</scope>
    <source>
        <strain>IFO 6365</strain>
    </source>
</reference>
<reference key="2">
    <citation type="journal article" date="1939" name="Biochem. J.">
        <title>Studies in the biochemistry of micro-organisms: Itaconic acid, a metabolic product of a strain of Aspergillus terreus Thom.</title>
        <authorList>
            <person name="Calam C.T."/>
            <person name="Oxford A.E."/>
            <person name="Raistrick H."/>
        </authorList>
    </citation>
    <scope>BIOTECHNOLOGY</scope>
</reference>
<comment type="function">
    <text evidence="3">Involved in the production of itaconic acid, a soluble unsaturated dicarboxylic acid mainly produced from sugars.</text>
</comment>
<comment type="catalytic activity">
    <reaction evidence="3">
        <text>cis-aconitate + H(+) = itaconate + CO2</text>
        <dbReference type="Rhea" id="RHEA:15253"/>
        <dbReference type="ChEBI" id="CHEBI:15378"/>
        <dbReference type="ChEBI" id="CHEBI:16383"/>
        <dbReference type="ChEBI" id="CHEBI:16526"/>
        <dbReference type="ChEBI" id="CHEBI:17240"/>
        <dbReference type="EC" id="4.1.1.6"/>
    </reaction>
</comment>
<comment type="subcellular location">
    <subcellularLocation>
        <location evidence="1">Mitochondrion</location>
    </subcellularLocation>
</comment>
<comment type="biotechnology">
    <text evidence="2">A.terreus has been used for the industrial production of itaconic acid because of its high production rate. Itaconic acid is used as a monomer to form polymers that are widely used as raw materials for latex, synthetic resins, adhesives, paint, and additives for acrylic resin fibers and paper. It is also used as an acidulant and for the pH adjustment of foods.</text>
</comment>
<comment type="similarity">
    <text evidence="4">Belongs to the PrpD family.</text>
</comment>
<dbReference type="EC" id="4.1.1.6"/>
<dbReference type="EMBL" id="AB326105">
    <property type="protein sequence ID" value="BAG49047.1"/>
    <property type="molecule type" value="Genomic_DNA"/>
</dbReference>
<dbReference type="SMR" id="B3IUN8"/>
<dbReference type="VEuPathDB" id="FungiDB:ATEG_09971"/>
<dbReference type="OrthoDB" id="10267976at2759"/>
<dbReference type="BioCyc" id="MetaCyc:MONOMER-13632"/>
<dbReference type="BRENDA" id="4.1.1.6">
    <property type="organism ID" value="536"/>
</dbReference>
<dbReference type="GO" id="GO:0005739">
    <property type="term" value="C:mitochondrion"/>
    <property type="evidence" value="ECO:0007669"/>
    <property type="project" value="UniProtKB-SubCell"/>
</dbReference>
<dbReference type="GO" id="GO:0047613">
    <property type="term" value="F:aconitate decarboxylase activity"/>
    <property type="evidence" value="ECO:0007669"/>
    <property type="project" value="UniProtKB-EC"/>
</dbReference>
<dbReference type="Gene3D" id="1.10.4100.10">
    <property type="entry name" value="2-methylcitrate dehydratase PrpD"/>
    <property type="match status" value="1"/>
</dbReference>
<dbReference type="Gene3D" id="3.30.1330.120">
    <property type="entry name" value="2-methylcitrate dehydratase PrpD"/>
    <property type="match status" value="1"/>
</dbReference>
<dbReference type="InterPro" id="IPR036148">
    <property type="entry name" value="MmgE/PrpD_sf"/>
</dbReference>
<dbReference type="InterPro" id="IPR042183">
    <property type="entry name" value="MmgE/PrpD_sf_1"/>
</dbReference>
<dbReference type="InterPro" id="IPR042188">
    <property type="entry name" value="MmgE/PrpD_sf_2"/>
</dbReference>
<dbReference type="InterPro" id="IPR005656">
    <property type="entry name" value="MmgE_PrpD"/>
</dbReference>
<dbReference type="InterPro" id="IPR045337">
    <property type="entry name" value="MmgE_PrpD_C"/>
</dbReference>
<dbReference type="InterPro" id="IPR045336">
    <property type="entry name" value="MmgE_PrpD_N"/>
</dbReference>
<dbReference type="PANTHER" id="PTHR16943:SF8">
    <property type="entry name" value="2-METHYLCITRATE DEHYDRATASE"/>
    <property type="match status" value="1"/>
</dbReference>
<dbReference type="PANTHER" id="PTHR16943">
    <property type="entry name" value="2-METHYLCITRATE DEHYDRATASE-RELATED"/>
    <property type="match status" value="1"/>
</dbReference>
<dbReference type="Pfam" id="PF19305">
    <property type="entry name" value="MmgE_PrpD_C"/>
    <property type="match status" value="1"/>
</dbReference>
<dbReference type="Pfam" id="PF03972">
    <property type="entry name" value="MmgE_PrpD_N"/>
    <property type="match status" value="1"/>
</dbReference>
<dbReference type="SUPFAM" id="SSF103378">
    <property type="entry name" value="2-methylcitrate dehydratase PrpD"/>
    <property type="match status" value="1"/>
</dbReference>
<organism>
    <name type="scientific">Aspergillus terreus</name>
    <dbReference type="NCBI Taxonomy" id="33178"/>
    <lineage>
        <taxon>Eukaryota</taxon>
        <taxon>Fungi</taxon>
        <taxon>Dikarya</taxon>
        <taxon>Ascomycota</taxon>
        <taxon>Pezizomycotina</taxon>
        <taxon>Eurotiomycetes</taxon>
        <taxon>Eurotiomycetidae</taxon>
        <taxon>Eurotiales</taxon>
        <taxon>Aspergillaceae</taxon>
        <taxon>Aspergillus</taxon>
        <taxon>Aspergillus subgen. Circumdati</taxon>
    </lineage>
</organism>
<accession>B3IUN8</accession>
<gene>
    <name type="primary">cad1</name>
</gene>
<protein>
    <recommendedName>
        <fullName>Cis-aconitate decarboxylase</fullName>
        <shortName>CAD</shortName>
        <ecNumber>4.1.1.6</ecNumber>
    </recommendedName>
    <alternativeName>
        <fullName>Aconitate decarboxylase</fullName>
    </alternativeName>
    <alternativeName>
        <fullName>Cis-aconitic acid decarboxylase</fullName>
    </alternativeName>
</protein>
<sequence>MTKQSADSNAKSGVTSEICHWASNLATDDIPSDVLERAKYLILDGIACAWVGARVPWSEKYVQATMSFEPPGACRVIGYGQKLGPVAAAMTNSAFIQATELDDYHSEAPLHSASIVLPAVFAASEVLAEQGKTISGIDVILAAIVGFESGPRIGKAIYGSDLLNNGWHCGAVYGAPAGALATGKLLGLTPDSMEDALGIACTQACGLMSAQYGGMVKRVQHGFAARNGLLGGLLAHGGYEAMKGVLERSYGGFLKMFTKGNGREPPYKEEEVVAGLGSFWHTFTIRIKLYACCGLVHGPVEAIENLQGRYPELLNRANLSNIRHVHVQLSTASNSHCGWIPEERPISSIAGQMSVAYILAVQLVDQQCLLSQFSEFDDNLERPEVWDLARKVTSSQSEEFDQDGNCLSAGRVRIEFNDGSSITESVEKPLGVKEPMPNERILHKYRTLAGSVTDESRVKEIEDLVLGLDRLTDISPLLELLNCPVKSPLV</sequence>
<proteinExistence type="evidence at protein level"/>
<name>CAD_ASPTE</name>
<feature type="chain" id="PRO_0000422959" description="Cis-aconitate decarboxylase">
    <location>
        <begin position="1"/>
        <end position="490"/>
    </location>
</feature>
<keyword id="KW-0903">Direct protein sequencing</keyword>
<keyword id="KW-0456">Lyase</keyword>
<keyword id="KW-0496">Mitochondrion</keyword>
<evidence type="ECO:0000250" key="1"/>
<evidence type="ECO:0000269" key="2">
    <source>
    </source>
</evidence>
<evidence type="ECO:0000269" key="3">
    <source>
    </source>
</evidence>
<evidence type="ECO:0000305" key="4"/>